<name>VG071_BPPF1</name>
<sequence length="71" mass="8570">MTKYLVEICTFHGPTRQRRWHRVHQGGSRVECQRWVEELVAVFPTEEEARRSFGLTRERARQVYRIRGVRA</sequence>
<organism>
    <name type="scientific">Pseudomonas phage Pf1</name>
    <name type="common">Bacteriophage Pf1</name>
    <dbReference type="NCBI Taxonomy" id="2011081"/>
    <lineage>
        <taxon>Viruses</taxon>
        <taxon>Monodnaviria</taxon>
        <taxon>Loebvirae</taxon>
        <taxon>Hofneiviricota</taxon>
        <taxon>Faserviricetes</taxon>
        <taxon>Tubulavirales</taxon>
        <taxon>Inoviridae</taxon>
        <taxon>Primolicivirus</taxon>
    </lineage>
</organism>
<organismHost>
    <name type="scientific">Pseudomonas aeruginosa</name>
    <dbReference type="NCBI Taxonomy" id="287"/>
</organismHost>
<reference key="1">
    <citation type="journal article" date="1991" name="J. Mol. Biol.">
        <title>DNA sequence of the filamentous bacteriophage Pf1.</title>
        <authorList>
            <person name="Hill D.F."/>
            <person name="Short N.J."/>
            <person name="Perham R.N."/>
            <person name="Petersen G.B."/>
        </authorList>
    </citation>
    <scope>NUCLEOTIDE SEQUENCE [GENOMIC DNA]</scope>
    <source>
        <strain>ATCC 25102-B1 / pf</strain>
    </source>
</reference>
<accession>P25136</accession>
<dbReference type="EMBL" id="X52107">
    <property type="protein sequence ID" value="CAA36338.1"/>
    <property type="molecule type" value="Genomic_DNA"/>
</dbReference>
<dbReference type="PIR" id="S15150">
    <property type="entry name" value="S15150"/>
</dbReference>
<dbReference type="RefSeq" id="NP_039610.1">
    <property type="nucleotide sequence ID" value="NC_001331.1"/>
</dbReference>
<dbReference type="GeneID" id="1260705"/>
<dbReference type="KEGG" id="vg:1260705"/>
<dbReference type="Proteomes" id="UP000002121">
    <property type="component" value="Genome"/>
</dbReference>
<proteinExistence type="predicted"/>
<protein>
    <recommendedName>
        <fullName>8.6 kDa protein</fullName>
    </recommendedName>
    <alternativeName>
        <fullName>ORF 71</fullName>
    </alternativeName>
</protein>
<feature type="chain" id="PRO_0000098222" description="8.6 kDa protein">
    <location>
        <begin position="1"/>
        <end position="71"/>
    </location>
</feature>
<keyword id="KW-1185">Reference proteome</keyword>